<reference key="1">
    <citation type="journal article" date="1997" name="Plant Mol. Biol.">
        <title>Characterization of the gene for delta1-pyrroline-5-carboxylate synthetase and correlation between the expression of the gene and salt tolerance in Oryza sativa L.</title>
        <authorList>
            <person name="Igarashi Y."/>
            <person name="Yoshiba Y."/>
            <person name="Sanada Y."/>
            <person name="Yamaguchi-Shinozaki K."/>
            <person name="Wada K."/>
            <person name="Shinozaki K."/>
        </authorList>
    </citation>
    <scope>NUCLEOTIDE SEQUENCE [MRNA]</scope>
    <scope>TISSUE SPECIFICITY</scope>
    <scope>INDUCTION</scope>
    <source>
        <strain>cv. Akibare</strain>
    </source>
</reference>
<reference key="2">
    <citation type="submission" date="2004-03" db="EMBL/GenBank/DDBJ databases">
        <title>Nucleotide sequence of delta-1-pyrroline-5-carboxylate synthetase.</title>
        <authorList>
            <person name="Huang T.-C."/>
            <person name="Chuang H.-S."/>
            <person name="Yen T.-Y."/>
            <person name="Huang Y.-W."/>
            <person name="Wu M.-L."/>
        </authorList>
    </citation>
    <scope>NUCLEOTIDE SEQUENCE [MRNA]</scope>
    <source>
        <strain>cv. Tainung 71</strain>
    </source>
</reference>
<reference key="3">
    <citation type="journal article" date="2005" name="Mol. Genet. Genomics">
        <title>A fine physical map of the rice chromosome 5.</title>
        <authorList>
            <person name="Cheng C.-H."/>
            <person name="Chung M.C."/>
            <person name="Liu S.-M."/>
            <person name="Chen S.-K."/>
            <person name="Kao F.Y."/>
            <person name="Lin S.-J."/>
            <person name="Hsiao S.-H."/>
            <person name="Tseng I.C."/>
            <person name="Hsing Y.-I.C."/>
            <person name="Wu H.-P."/>
            <person name="Chen C.-S."/>
            <person name="Shaw J.-F."/>
            <person name="Wu J."/>
            <person name="Matsumoto T."/>
            <person name="Sasaki T."/>
            <person name="Chen H.-C."/>
            <person name="Chow T.-Y."/>
        </authorList>
    </citation>
    <scope>NUCLEOTIDE SEQUENCE [LARGE SCALE GENOMIC DNA]</scope>
    <source>
        <strain>cv. Nipponbare</strain>
    </source>
</reference>
<reference key="4">
    <citation type="journal article" date="2005" name="Nature">
        <title>The map-based sequence of the rice genome.</title>
        <authorList>
            <consortium name="International rice genome sequencing project (IRGSP)"/>
        </authorList>
    </citation>
    <scope>NUCLEOTIDE SEQUENCE [LARGE SCALE GENOMIC DNA]</scope>
    <source>
        <strain>cv. Nipponbare</strain>
    </source>
</reference>
<reference key="5">
    <citation type="journal article" date="2008" name="Nucleic Acids Res.">
        <title>The rice annotation project database (RAP-DB): 2008 update.</title>
        <authorList>
            <consortium name="The rice annotation project (RAP)"/>
        </authorList>
    </citation>
    <scope>GENOME REANNOTATION</scope>
    <source>
        <strain>cv. Nipponbare</strain>
    </source>
</reference>
<reference key="6">
    <citation type="journal article" date="2013" name="Rice">
        <title>Improvement of the Oryza sativa Nipponbare reference genome using next generation sequence and optical map data.</title>
        <authorList>
            <person name="Kawahara Y."/>
            <person name="de la Bastide M."/>
            <person name="Hamilton J.P."/>
            <person name="Kanamori H."/>
            <person name="McCombie W.R."/>
            <person name="Ouyang S."/>
            <person name="Schwartz D.C."/>
            <person name="Tanaka T."/>
            <person name="Wu J."/>
            <person name="Zhou S."/>
            <person name="Childs K.L."/>
            <person name="Davidson R.M."/>
            <person name="Lin H."/>
            <person name="Quesada-Ocampo L."/>
            <person name="Vaillancourt B."/>
            <person name="Sakai H."/>
            <person name="Lee S.S."/>
            <person name="Kim J."/>
            <person name="Numa H."/>
            <person name="Itoh T."/>
            <person name="Buell C.R."/>
            <person name="Matsumoto T."/>
        </authorList>
    </citation>
    <scope>GENOME REANNOTATION</scope>
    <source>
        <strain>cv. Nipponbare</strain>
    </source>
</reference>
<reference key="7">
    <citation type="journal article" date="2003" name="Science">
        <title>Collection, mapping, and annotation of over 28,000 cDNA clones from japonica rice.</title>
        <authorList>
            <consortium name="The rice full-length cDNA consortium"/>
        </authorList>
    </citation>
    <scope>NUCLEOTIDE SEQUENCE [LARGE SCALE MRNA]</scope>
    <source>
        <strain>cv. Nipponbare</strain>
    </source>
</reference>
<reference key="8">
    <citation type="journal article" date="2014" name="Ying Yong Yu Huan Jing Sheng Wu Xue Bao">
        <title>Co-expression of rice OsP5CS1 and OsP5CS2 genes in transgenic tobacco resulted in elevated proline biosynthesis and enhanced abiotic stress tolerance.</title>
        <authorList>
            <person name="Zhang X."/>
            <person name="Tang W."/>
            <person name="Liu J."/>
            <person name="Liu Y."/>
        </authorList>
    </citation>
    <scope>FUNCTION</scope>
</reference>
<feature type="chain" id="PRO_0000109777" description="Delta-1-pyrroline-5-carboxylate synthase 1">
    <location>
        <begin position="1"/>
        <end position="716"/>
    </location>
</feature>
<feature type="region of interest" description="Glutamate 5-kinase">
    <location>
        <begin position="1"/>
        <end position="296"/>
    </location>
</feature>
<feature type="region of interest" description="Gamma-glutamyl phosphate reductase">
    <location>
        <begin position="297"/>
        <end position="716"/>
    </location>
</feature>
<feature type="binding site" evidence="1">
    <location>
        <position position="60"/>
    </location>
    <ligand>
        <name>substrate</name>
    </ligand>
</feature>
<feature type="binding site" evidence="1">
    <location>
        <position position="157"/>
    </location>
    <ligand>
        <name>substrate</name>
    </ligand>
</feature>
<feature type="binding site" evidence="1">
    <location>
        <position position="176"/>
    </location>
    <ligand>
        <name>substrate</name>
    </ligand>
</feature>
<feature type="binding site" evidence="2">
    <location>
        <begin position="196"/>
        <end position="197"/>
    </location>
    <ligand>
        <name>ATP</name>
        <dbReference type="ChEBI" id="CHEBI:30616"/>
    </ligand>
</feature>
<feature type="binding site" evidence="2">
    <location>
        <begin position="202"/>
        <end position="207"/>
    </location>
    <ligand>
        <name>ATP</name>
        <dbReference type="ChEBI" id="CHEBI:30616"/>
    </ligand>
</feature>
<feature type="binding site" evidence="2">
    <location>
        <begin position="236"/>
        <end position="242"/>
    </location>
    <ligand>
        <name>ATP</name>
        <dbReference type="ChEBI" id="CHEBI:30616"/>
    </ligand>
</feature>
<feature type="sequence conflict" description="In Ref. 2; AAS89034." evidence="7" ref="2">
    <original>F</original>
    <variation>S</variation>
    <location>
        <position position="173"/>
    </location>
</feature>
<feature type="sequence conflict" description="In Ref. 1; BAA19916." evidence="7" ref="1">
    <original>I</original>
    <variation>T</variation>
    <location>
        <position position="488"/>
    </location>
</feature>
<feature type="sequence conflict" description="In Ref. 2; AAS89034." evidence="7" ref="2">
    <original>K</original>
    <variation>E</variation>
    <location>
        <position position="500"/>
    </location>
</feature>
<feature type="sequence conflict" description="In Ref. 1; BAA19916." evidence="7" ref="1">
    <original>H</original>
    <variation>L</variation>
    <location>
        <position position="530"/>
    </location>
</feature>
<feature type="sequence conflict" description="In Ref. 1; BAA19916." evidence="7" ref="1">
    <original>I</original>
    <variation>T</variation>
    <location>
        <position position="537"/>
    </location>
</feature>
<protein>
    <recommendedName>
        <fullName evidence="7">Delta-1-pyrroline-5-carboxylate synthase 1</fullName>
        <shortName evidence="6">OsP5CS1</shortName>
    </recommendedName>
    <domain>
        <recommendedName>
            <fullName>Glutamate 5-kinase</fullName>
            <shortName>GK</shortName>
            <ecNumber>2.7.2.11</ecNumber>
        </recommendedName>
        <alternativeName>
            <fullName>Gamma-glutamyl kinase</fullName>
        </alternativeName>
    </domain>
    <domain>
        <recommendedName>
            <fullName>Gamma-glutamyl phosphate reductase</fullName>
            <shortName>GPR</shortName>
            <ecNumber>1.2.1.41</ecNumber>
        </recommendedName>
        <alternativeName>
            <fullName>Glutamate-5-semialdehyde dehydrogenase</fullName>
        </alternativeName>
        <alternativeName>
            <fullName>Glutamyl-gamma-semialdehyde dehydrogenase</fullName>
        </alternativeName>
    </domain>
</protein>
<evidence type="ECO:0000250" key="1">
    <source>
        <dbReference type="UniProtKB" id="P0A7B5"/>
    </source>
</evidence>
<evidence type="ECO:0000250" key="2">
    <source>
        <dbReference type="UniProtKB" id="Q9PJ29"/>
    </source>
</evidence>
<evidence type="ECO:0000269" key="3">
    <source>
    </source>
</evidence>
<evidence type="ECO:0000269" key="4">
    <source ref="8"/>
</evidence>
<evidence type="ECO:0000303" key="5">
    <source>
    </source>
</evidence>
<evidence type="ECO:0000303" key="6">
    <source ref="8"/>
</evidence>
<evidence type="ECO:0000305" key="7"/>
<organism>
    <name type="scientific">Oryza sativa subsp. japonica</name>
    <name type="common">Rice</name>
    <dbReference type="NCBI Taxonomy" id="39947"/>
    <lineage>
        <taxon>Eukaryota</taxon>
        <taxon>Viridiplantae</taxon>
        <taxon>Streptophyta</taxon>
        <taxon>Embryophyta</taxon>
        <taxon>Tracheophyta</taxon>
        <taxon>Spermatophyta</taxon>
        <taxon>Magnoliopsida</taxon>
        <taxon>Liliopsida</taxon>
        <taxon>Poales</taxon>
        <taxon>Poaceae</taxon>
        <taxon>BOP clade</taxon>
        <taxon>Oryzoideae</taxon>
        <taxon>Oryzeae</taxon>
        <taxon>Oryzinae</taxon>
        <taxon>Oryza</taxon>
        <taxon>Oryza sativa</taxon>
    </lineage>
</organism>
<name>P5CS1_ORYSJ</name>
<keyword id="KW-0028">Amino-acid biosynthesis</keyword>
<keyword id="KW-0067">ATP-binding</keyword>
<keyword id="KW-0418">Kinase</keyword>
<keyword id="KW-0511">Multifunctional enzyme</keyword>
<keyword id="KW-0521">NADP</keyword>
<keyword id="KW-0547">Nucleotide-binding</keyword>
<keyword id="KW-0560">Oxidoreductase</keyword>
<keyword id="KW-0641">Proline biosynthesis</keyword>
<keyword id="KW-1185">Reference proteome</keyword>
<keyword id="KW-0346">Stress response</keyword>
<keyword id="KW-0808">Transferase</keyword>
<gene>
    <name evidence="6" type="primary">P5CS1</name>
    <name evidence="5" type="synonym">P5CS</name>
    <name type="ordered locus">Os05g0455500</name>
    <name type="ordered locus">LOC_Os05g38150</name>
    <name type="ORF">OJ1651_D06.9</name>
</gene>
<sequence length="716" mass="77745">MASVDPSRSFVRDVKRVIIKVGTAVVSRQDGRLALGRVGALCEQVKELNSLGYEVILVTSGAVGVGRQRLRYRKLVNSSFADLQKPQMELDGKACAAVGQSGLMALYDMLFNQLDVSSSQLLVTDSDFENPKFREQLTETVESLLDLKVIPIFNENDAISTRKAPYEDSSGIFWDNDSLAGLLALELKADLLILLSDVDGLYSGPPSEPSSKIIHTYIKEKHQQEITFGDKSRVGRGGMTAKVKAAVLASNSGTPVVITSGFENRSILKVLHGEKIGTLFHKNANLWESSKDVSTREMAVAARDCSRHLQNLSSEERKKILLDVADALEANEDLIRSENEADVAAAQVAGYEKPLVARLTIKPGKIASLAKSIRTLANMEDPINQILKKTEVADDLVLEKTSCPLGVLLIVFESRPDALVQIASLAIRSGNGLLLKGGKEAIRSNTILHKVITDAIPRNVGEKLIGLVTTRDEIADLLKLDDVIDLVIPRGSNKLVSQIKASTKIPVLGHADGICHVYIDKSADMDMAKHIVMDAKIDYPAACNAMETLLVHKDLMKSPGLDDILVALKTEGVNIYGGPIAHKALGFPKAVSFHHEYSSMACTVEFVDDVQSAIDHIHRYGSAHTDCIVTTDDKVAETFLRRVDSAAVFHNASTRFSDGARFGLGAEVGISTGRIHARGPVGVEGLLTTRWILRGRGQVVNGDKDVVYTHKSLPLQ</sequence>
<accession>O04226</accession>
<accession>Q0DHN6</accession>
<accession>Q60EM4</accession>
<accession>Q6PW76</accession>
<comment type="function">
    <text evidence="4">P5CS plays a key role in proline biosynthesis, leading to osmoregulation in plants. Involved in abiotic stress tolerance.</text>
</comment>
<comment type="catalytic activity">
    <reaction>
        <text>L-glutamate + ATP = L-glutamyl 5-phosphate + ADP</text>
        <dbReference type="Rhea" id="RHEA:14877"/>
        <dbReference type="ChEBI" id="CHEBI:29985"/>
        <dbReference type="ChEBI" id="CHEBI:30616"/>
        <dbReference type="ChEBI" id="CHEBI:58274"/>
        <dbReference type="ChEBI" id="CHEBI:456216"/>
        <dbReference type="EC" id="2.7.2.11"/>
    </reaction>
</comment>
<comment type="catalytic activity">
    <reaction>
        <text>L-glutamate 5-semialdehyde + phosphate + NADP(+) = L-glutamyl 5-phosphate + NADPH + H(+)</text>
        <dbReference type="Rhea" id="RHEA:19541"/>
        <dbReference type="ChEBI" id="CHEBI:15378"/>
        <dbReference type="ChEBI" id="CHEBI:43474"/>
        <dbReference type="ChEBI" id="CHEBI:57783"/>
        <dbReference type="ChEBI" id="CHEBI:58066"/>
        <dbReference type="ChEBI" id="CHEBI:58274"/>
        <dbReference type="ChEBI" id="CHEBI:58349"/>
        <dbReference type="EC" id="1.2.1.41"/>
    </reaction>
</comment>
<comment type="activity regulation">
    <text>Feedback regulated by proline.</text>
</comment>
<comment type="pathway">
    <text>Amino-acid biosynthesis; L-proline biosynthesis; L-glutamate 5-semialdehyde from L-glutamate: step 1/2.</text>
</comment>
<comment type="pathway">
    <text>Amino-acid biosynthesis; L-proline biosynthesis; L-glutamate 5-semialdehyde from L-glutamate: step 2/2.</text>
</comment>
<comment type="tissue specificity">
    <text evidence="3">Expressed at high levels in leaves.</text>
</comment>
<comment type="induction">
    <text evidence="3">Induced by salt, drought and cold stresses, and abscisic acid (ABA).</text>
</comment>
<comment type="miscellaneous">
    <text evidence="4">Tobacco plants over-expressing P5CS1 and P5CS2 have elevated proline levels and display enhanced abiotic stress tolerance.</text>
</comment>
<comment type="similarity">
    <text evidence="7">In the N-terminal section; belongs to the glutamate 5-kinase family.</text>
</comment>
<comment type="similarity">
    <text evidence="7">In the C-terminal section; belongs to the gamma-glutamyl phosphate reductase family.</text>
</comment>
<proteinExistence type="evidence at transcript level"/>
<dbReference type="EC" id="2.7.2.11"/>
<dbReference type="EC" id="1.2.1.41"/>
<dbReference type="EMBL" id="D49714">
    <property type="protein sequence ID" value="BAA19916.1"/>
    <property type="molecule type" value="mRNA"/>
</dbReference>
<dbReference type="EMBL" id="AY574031">
    <property type="protein sequence ID" value="AAS89034.1"/>
    <property type="molecule type" value="mRNA"/>
</dbReference>
<dbReference type="EMBL" id="AC111016">
    <property type="protein sequence ID" value="AAU90213.1"/>
    <property type="molecule type" value="Genomic_DNA"/>
</dbReference>
<dbReference type="EMBL" id="AP008211">
    <property type="protein sequence ID" value="BAF17637.1"/>
    <property type="molecule type" value="Genomic_DNA"/>
</dbReference>
<dbReference type="EMBL" id="AP014961">
    <property type="protein sequence ID" value="BAS94357.1"/>
    <property type="molecule type" value="Genomic_DNA"/>
</dbReference>
<dbReference type="EMBL" id="AK102633">
    <property type="protein sequence ID" value="BAG95649.1"/>
    <property type="molecule type" value="mRNA"/>
</dbReference>
<dbReference type="PIR" id="T03695">
    <property type="entry name" value="T03695"/>
</dbReference>
<dbReference type="RefSeq" id="NP_001389494.1">
    <property type="nucleotide sequence ID" value="NM_001402565.1"/>
</dbReference>
<dbReference type="RefSeq" id="XP_015640176.1">
    <property type="nucleotide sequence ID" value="XM_015784690.1"/>
</dbReference>
<dbReference type="SMR" id="O04226"/>
<dbReference type="FunCoup" id="O04226">
    <property type="interactions" value="1742"/>
</dbReference>
<dbReference type="STRING" id="39947.O04226"/>
<dbReference type="PaxDb" id="39947-O04226"/>
<dbReference type="EnsemblPlants" id="Os05t0455500-02">
    <property type="protein sequence ID" value="Os05t0455500-02"/>
    <property type="gene ID" value="Os05g0455500"/>
</dbReference>
<dbReference type="GeneID" id="4338979"/>
<dbReference type="Gramene" id="Os05t0455500-02">
    <property type="protein sequence ID" value="Os05t0455500-02"/>
    <property type="gene ID" value="Os05g0455500"/>
</dbReference>
<dbReference type="KEGG" id="dosa:Os05g0455500"/>
<dbReference type="eggNOG" id="KOG1154">
    <property type="taxonomic scope" value="Eukaryota"/>
</dbReference>
<dbReference type="eggNOG" id="KOG4165">
    <property type="taxonomic scope" value="Eukaryota"/>
</dbReference>
<dbReference type="HOGENOM" id="CLU_016144_0_0_1"/>
<dbReference type="InParanoid" id="O04226"/>
<dbReference type="OMA" id="PPMFIVD"/>
<dbReference type="OrthoDB" id="1934954at2759"/>
<dbReference type="BRENDA" id="1.2.1.88">
    <property type="organism ID" value="4460"/>
</dbReference>
<dbReference type="PlantReactome" id="R-OSA-1119495">
    <property type="pathway name" value="Citrulline biosynthesis"/>
</dbReference>
<dbReference type="PlantReactome" id="R-OSA-1119631">
    <property type="pathway name" value="Proline biosynthesis I"/>
</dbReference>
<dbReference type="UniPathway" id="UPA00098">
    <property type="reaction ID" value="UER00359"/>
</dbReference>
<dbReference type="UniPathway" id="UPA00098">
    <property type="reaction ID" value="UER00360"/>
</dbReference>
<dbReference type="Proteomes" id="UP000000763">
    <property type="component" value="Chromosome 5"/>
</dbReference>
<dbReference type="Proteomes" id="UP000059680">
    <property type="component" value="Chromosome 5"/>
</dbReference>
<dbReference type="GO" id="GO:0005737">
    <property type="term" value="C:cytoplasm"/>
    <property type="evidence" value="ECO:0007669"/>
    <property type="project" value="InterPro"/>
</dbReference>
<dbReference type="GO" id="GO:0005524">
    <property type="term" value="F:ATP binding"/>
    <property type="evidence" value="ECO:0007669"/>
    <property type="project" value="UniProtKB-KW"/>
</dbReference>
<dbReference type="GO" id="GO:0004349">
    <property type="term" value="F:glutamate 5-kinase activity"/>
    <property type="evidence" value="ECO:0007669"/>
    <property type="project" value="UniProtKB-EC"/>
</dbReference>
<dbReference type="GO" id="GO:0004350">
    <property type="term" value="F:glutamate-5-semialdehyde dehydrogenase activity"/>
    <property type="evidence" value="ECO:0000318"/>
    <property type="project" value="GO_Central"/>
</dbReference>
<dbReference type="GO" id="GO:0055129">
    <property type="term" value="P:L-proline biosynthetic process"/>
    <property type="evidence" value="ECO:0007669"/>
    <property type="project" value="UniProtKB-UniPathway"/>
</dbReference>
<dbReference type="GO" id="GO:0006561">
    <property type="term" value="P:proline biosynthetic process"/>
    <property type="evidence" value="ECO:0000315"/>
    <property type="project" value="UniProtKB"/>
</dbReference>
<dbReference type="CDD" id="cd04256">
    <property type="entry name" value="AAK_P5CS_ProBA"/>
    <property type="match status" value="1"/>
</dbReference>
<dbReference type="CDD" id="cd07079">
    <property type="entry name" value="ALDH_F18-19_ProA-GPR"/>
    <property type="match status" value="1"/>
</dbReference>
<dbReference type="FunFam" id="3.40.1160.10:FF:000013">
    <property type="entry name" value="Delta-1-pyrroline-5-carboxylate synthase"/>
    <property type="match status" value="1"/>
</dbReference>
<dbReference type="FunFam" id="3.40.309.10:FF:000015">
    <property type="entry name" value="Delta-1-pyrroline-5-carboxylate synthase"/>
    <property type="match status" value="1"/>
</dbReference>
<dbReference type="FunFam" id="3.40.605.10:FF:000062">
    <property type="entry name" value="Delta-1-pyrroline-5-carboxylate synthase"/>
    <property type="match status" value="1"/>
</dbReference>
<dbReference type="Gene3D" id="3.40.1160.10">
    <property type="entry name" value="Acetylglutamate kinase-like"/>
    <property type="match status" value="1"/>
</dbReference>
<dbReference type="Gene3D" id="3.40.605.10">
    <property type="entry name" value="Aldehyde Dehydrogenase, Chain A, domain 1"/>
    <property type="match status" value="1"/>
</dbReference>
<dbReference type="Gene3D" id="3.40.309.10">
    <property type="entry name" value="Aldehyde Dehydrogenase, Chain A, domain 2"/>
    <property type="match status" value="1"/>
</dbReference>
<dbReference type="HAMAP" id="MF_00412">
    <property type="entry name" value="ProA"/>
    <property type="match status" value="1"/>
</dbReference>
<dbReference type="HAMAP" id="MF_00456">
    <property type="entry name" value="ProB"/>
    <property type="match status" value="1"/>
</dbReference>
<dbReference type="InterPro" id="IPR036393">
    <property type="entry name" value="AceGlu_kinase-like_sf"/>
</dbReference>
<dbReference type="InterPro" id="IPR016161">
    <property type="entry name" value="Ald_DH/histidinol_DH"/>
</dbReference>
<dbReference type="InterPro" id="IPR016163">
    <property type="entry name" value="Ald_DH_C"/>
</dbReference>
<dbReference type="InterPro" id="IPR016162">
    <property type="entry name" value="Ald_DH_N"/>
</dbReference>
<dbReference type="InterPro" id="IPR015590">
    <property type="entry name" value="Aldehyde_DH_dom"/>
</dbReference>
<dbReference type="InterPro" id="IPR001048">
    <property type="entry name" value="Asp/Glu/Uridylate_kinase"/>
</dbReference>
<dbReference type="InterPro" id="IPR020593">
    <property type="entry name" value="G-glutamylP_reductase_CS"/>
</dbReference>
<dbReference type="InterPro" id="IPR041744">
    <property type="entry name" value="G5K_ProBA"/>
</dbReference>
<dbReference type="InterPro" id="IPR001057">
    <property type="entry name" value="Glu/AcGlu_kinase"/>
</dbReference>
<dbReference type="InterPro" id="IPR005715">
    <property type="entry name" value="Glu_5kinase/COase_Synthase"/>
</dbReference>
<dbReference type="InterPro" id="IPR019797">
    <property type="entry name" value="Glutamate_5-kinase_CS"/>
</dbReference>
<dbReference type="InterPro" id="IPR000965">
    <property type="entry name" value="GPR_dom"/>
</dbReference>
<dbReference type="InterPro" id="IPR005766">
    <property type="entry name" value="P5_carboxy_syn"/>
</dbReference>
<dbReference type="NCBIfam" id="TIGR01092">
    <property type="entry name" value="P5CS"/>
    <property type="match status" value="1"/>
</dbReference>
<dbReference type="NCBIfam" id="NF001221">
    <property type="entry name" value="PRK00197.1"/>
    <property type="match status" value="1"/>
</dbReference>
<dbReference type="NCBIfam" id="TIGR00407">
    <property type="entry name" value="proA"/>
    <property type="match status" value="1"/>
</dbReference>
<dbReference type="NCBIfam" id="TIGR01027">
    <property type="entry name" value="proB"/>
    <property type="match status" value="1"/>
</dbReference>
<dbReference type="PANTHER" id="PTHR11063:SF8">
    <property type="entry name" value="DELTA-1-PYRROLINE-5-CARBOXYLATE SYNTHASE"/>
    <property type="match status" value="1"/>
</dbReference>
<dbReference type="PANTHER" id="PTHR11063">
    <property type="entry name" value="GLUTAMATE SEMIALDEHYDE DEHYDROGENASE"/>
    <property type="match status" value="1"/>
</dbReference>
<dbReference type="Pfam" id="PF00696">
    <property type="entry name" value="AA_kinase"/>
    <property type="match status" value="1"/>
</dbReference>
<dbReference type="Pfam" id="PF00171">
    <property type="entry name" value="Aldedh"/>
    <property type="match status" value="1"/>
</dbReference>
<dbReference type="PIRSF" id="PIRSF036429">
    <property type="entry name" value="P5C_syn"/>
    <property type="match status" value="1"/>
</dbReference>
<dbReference type="PRINTS" id="PR00474">
    <property type="entry name" value="GLU5KINASE"/>
</dbReference>
<dbReference type="SUPFAM" id="SSF53720">
    <property type="entry name" value="ALDH-like"/>
    <property type="match status" value="1"/>
</dbReference>
<dbReference type="SUPFAM" id="SSF53633">
    <property type="entry name" value="Carbamate kinase-like"/>
    <property type="match status" value="1"/>
</dbReference>
<dbReference type="PROSITE" id="PS00902">
    <property type="entry name" value="GLUTAMATE_5_KINASE"/>
    <property type="match status" value="1"/>
</dbReference>
<dbReference type="PROSITE" id="PS01223">
    <property type="entry name" value="PROA"/>
    <property type="match status" value="1"/>
</dbReference>